<comment type="similarity">
    <text evidence="1">Belongs to the UPF0304 family.</text>
</comment>
<dbReference type="EMBL" id="AL513382">
    <property type="protein sequence ID" value="CAD07567.1"/>
    <property type="molecule type" value="Genomic_DNA"/>
</dbReference>
<dbReference type="EMBL" id="AE014613">
    <property type="protein sequence ID" value="AAO68235.1"/>
    <property type="molecule type" value="Genomic_DNA"/>
</dbReference>
<dbReference type="RefSeq" id="NP_456877.1">
    <property type="nucleotide sequence ID" value="NC_003198.1"/>
</dbReference>
<dbReference type="RefSeq" id="WP_000426135.1">
    <property type="nucleotide sequence ID" value="NZ_WSUR01000029.1"/>
</dbReference>
<dbReference type="SMR" id="P60816"/>
<dbReference type="STRING" id="220341.gene:17586464"/>
<dbReference type="KEGG" id="stt:t0529"/>
<dbReference type="KEGG" id="sty:STY2565"/>
<dbReference type="PATRIC" id="fig|220341.7.peg.2596"/>
<dbReference type="eggNOG" id="COG3013">
    <property type="taxonomic scope" value="Bacteria"/>
</dbReference>
<dbReference type="HOGENOM" id="CLU_101021_1_0_6"/>
<dbReference type="OMA" id="MYHALQV"/>
<dbReference type="OrthoDB" id="5589463at2"/>
<dbReference type="Proteomes" id="UP000000541">
    <property type="component" value="Chromosome"/>
</dbReference>
<dbReference type="Proteomes" id="UP000002670">
    <property type="component" value="Chromosome"/>
</dbReference>
<dbReference type="FunFam" id="1.10.3190.10:FF:000001">
    <property type="entry name" value="UPF0304 protein YfbU"/>
    <property type="match status" value="1"/>
</dbReference>
<dbReference type="Gene3D" id="1.10.287.680">
    <property type="entry name" value="Helix hairpin bin"/>
    <property type="match status" value="1"/>
</dbReference>
<dbReference type="Gene3D" id="1.10.3190.10">
    <property type="entry name" value="yfbu gene product, domain 2"/>
    <property type="match status" value="1"/>
</dbReference>
<dbReference type="HAMAP" id="MF_00762">
    <property type="entry name" value="UPF0304"/>
    <property type="match status" value="1"/>
</dbReference>
<dbReference type="InterPro" id="IPR005587">
    <property type="entry name" value="UPF0304_YfbU"/>
</dbReference>
<dbReference type="InterPro" id="IPR023146">
    <property type="entry name" value="YfbU_alpha-helical_sf"/>
</dbReference>
<dbReference type="InterPro" id="IPR023145">
    <property type="entry name" value="YfbU_helix-hairpin_sf"/>
</dbReference>
<dbReference type="NCBIfam" id="NF003936">
    <property type="entry name" value="PRK05445.1"/>
    <property type="match status" value="1"/>
</dbReference>
<dbReference type="Pfam" id="PF03887">
    <property type="entry name" value="YfbU"/>
    <property type="match status" value="1"/>
</dbReference>
<dbReference type="PIRSF" id="PIRSF006272">
    <property type="entry name" value="UCP006272"/>
    <property type="match status" value="1"/>
</dbReference>
<dbReference type="SUPFAM" id="SSF116960">
    <property type="entry name" value="YfbU-like"/>
    <property type="match status" value="1"/>
</dbReference>
<evidence type="ECO:0000255" key="1">
    <source>
        <dbReference type="HAMAP-Rule" id="MF_00762"/>
    </source>
</evidence>
<sequence>MEMTNAQRLILSNQYKMMTMLDPTNAERYRRLQTIIERGYGLQMRELDREFGELTEETCRTIIDIMEMYHALHVSWTNLKDTQAIDERRVTFLGFDAATEARYLGYVRFMVNIEGRYTHFDAGTHGFNAQTPMWEKYQRMLNVWHACPRQYHLSANEINQIINA</sequence>
<protein>
    <recommendedName>
        <fullName evidence="1">UPF0304 protein YfbU</fullName>
    </recommendedName>
</protein>
<reference key="1">
    <citation type="journal article" date="2001" name="Nature">
        <title>Complete genome sequence of a multiple drug resistant Salmonella enterica serovar Typhi CT18.</title>
        <authorList>
            <person name="Parkhill J."/>
            <person name="Dougan G."/>
            <person name="James K.D."/>
            <person name="Thomson N.R."/>
            <person name="Pickard D."/>
            <person name="Wain J."/>
            <person name="Churcher C.M."/>
            <person name="Mungall K.L."/>
            <person name="Bentley S.D."/>
            <person name="Holden M.T.G."/>
            <person name="Sebaihia M."/>
            <person name="Baker S."/>
            <person name="Basham D."/>
            <person name="Brooks K."/>
            <person name="Chillingworth T."/>
            <person name="Connerton P."/>
            <person name="Cronin A."/>
            <person name="Davis P."/>
            <person name="Davies R.M."/>
            <person name="Dowd L."/>
            <person name="White N."/>
            <person name="Farrar J."/>
            <person name="Feltwell T."/>
            <person name="Hamlin N."/>
            <person name="Haque A."/>
            <person name="Hien T.T."/>
            <person name="Holroyd S."/>
            <person name="Jagels K."/>
            <person name="Krogh A."/>
            <person name="Larsen T.S."/>
            <person name="Leather S."/>
            <person name="Moule S."/>
            <person name="O'Gaora P."/>
            <person name="Parry C."/>
            <person name="Quail M.A."/>
            <person name="Rutherford K.M."/>
            <person name="Simmonds M."/>
            <person name="Skelton J."/>
            <person name="Stevens K."/>
            <person name="Whitehead S."/>
            <person name="Barrell B.G."/>
        </authorList>
    </citation>
    <scope>NUCLEOTIDE SEQUENCE [LARGE SCALE GENOMIC DNA]</scope>
    <source>
        <strain>CT18</strain>
    </source>
</reference>
<reference key="2">
    <citation type="journal article" date="2003" name="J. Bacteriol.">
        <title>Comparative genomics of Salmonella enterica serovar Typhi strains Ty2 and CT18.</title>
        <authorList>
            <person name="Deng W."/>
            <person name="Liou S.-R."/>
            <person name="Plunkett G. III"/>
            <person name="Mayhew G.F."/>
            <person name="Rose D.J."/>
            <person name="Burland V."/>
            <person name="Kodoyianni V."/>
            <person name="Schwartz D.C."/>
            <person name="Blattner F.R."/>
        </authorList>
    </citation>
    <scope>NUCLEOTIDE SEQUENCE [LARGE SCALE GENOMIC DNA]</scope>
    <source>
        <strain>ATCC 700931 / Ty2</strain>
    </source>
</reference>
<accession>P60816</accession>
<accession>Q8XGJ0</accession>
<gene>
    <name evidence="1" type="primary">yfbU</name>
    <name type="ordered locus">STY2565</name>
    <name type="ordered locus">t0529</name>
</gene>
<feature type="chain" id="PRO_0000218167" description="UPF0304 protein YfbU">
    <location>
        <begin position="1"/>
        <end position="164"/>
    </location>
</feature>
<name>YFBU_SALTI</name>
<proteinExistence type="inferred from homology"/>
<organism>
    <name type="scientific">Salmonella typhi</name>
    <dbReference type="NCBI Taxonomy" id="90370"/>
    <lineage>
        <taxon>Bacteria</taxon>
        <taxon>Pseudomonadati</taxon>
        <taxon>Pseudomonadota</taxon>
        <taxon>Gammaproteobacteria</taxon>
        <taxon>Enterobacterales</taxon>
        <taxon>Enterobacteriaceae</taxon>
        <taxon>Salmonella</taxon>
    </lineage>
</organism>